<reference evidence="5" key="1">
    <citation type="journal article" date="2002" name="Science">
        <title>The genome sequence of the malaria mosquito Anopheles gambiae.</title>
        <authorList>
            <person name="Holt R.A."/>
            <person name="Subramanian G.M."/>
            <person name="Halpern A."/>
            <person name="Sutton G.G."/>
            <person name="Charlab R."/>
            <person name="Nusskern D.R."/>
            <person name="Wincker P."/>
            <person name="Clark A.G."/>
            <person name="Ribeiro J.M.C."/>
            <person name="Wides R."/>
            <person name="Salzberg S.L."/>
            <person name="Loftus B.J."/>
            <person name="Yandell M.D."/>
            <person name="Majoros W.H."/>
            <person name="Rusch D.B."/>
            <person name="Lai Z."/>
            <person name="Kraft C.L."/>
            <person name="Abril J.F."/>
            <person name="Anthouard V."/>
            <person name="Arensburger P."/>
            <person name="Atkinson P.W."/>
            <person name="Baden H."/>
            <person name="de Berardinis V."/>
            <person name="Baldwin D."/>
            <person name="Benes V."/>
            <person name="Biedler J."/>
            <person name="Blass C."/>
            <person name="Bolanos R."/>
            <person name="Boscus D."/>
            <person name="Barnstead M."/>
            <person name="Cai S."/>
            <person name="Center A."/>
            <person name="Chaturverdi K."/>
            <person name="Christophides G.K."/>
            <person name="Chrystal M.A.M."/>
            <person name="Clamp M."/>
            <person name="Cravchik A."/>
            <person name="Curwen V."/>
            <person name="Dana A."/>
            <person name="Delcher A."/>
            <person name="Dew I."/>
            <person name="Evans C.A."/>
            <person name="Flanigan M."/>
            <person name="Grundschober-Freimoser A."/>
            <person name="Friedli L."/>
            <person name="Gu Z."/>
            <person name="Guan P."/>
            <person name="Guigo R."/>
            <person name="Hillenmeyer M.E."/>
            <person name="Hladun S.L."/>
            <person name="Hogan J.R."/>
            <person name="Hong Y.S."/>
            <person name="Hoover J."/>
            <person name="Jaillon O."/>
            <person name="Ke Z."/>
            <person name="Kodira C.D."/>
            <person name="Kokoza E."/>
            <person name="Koutsos A."/>
            <person name="Letunic I."/>
            <person name="Levitsky A.A."/>
            <person name="Liang Y."/>
            <person name="Lin J.-J."/>
            <person name="Lobo N.F."/>
            <person name="Lopez J.R."/>
            <person name="Malek J.A."/>
            <person name="McIntosh T.C."/>
            <person name="Meister S."/>
            <person name="Miller J.R."/>
            <person name="Mobarry C."/>
            <person name="Mongin E."/>
            <person name="Murphy S.D."/>
            <person name="O'Brochta D.A."/>
            <person name="Pfannkoch C."/>
            <person name="Qi R."/>
            <person name="Regier M.A."/>
            <person name="Remington K."/>
            <person name="Shao H."/>
            <person name="Sharakhova M.V."/>
            <person name="Sitter C.D."/>
            <person name="Shetty J."/>
            <person name="Smith T.J."/>
            <person name="Strong R."/>
            <person name="Sun J."/>
            <person name="Thomasova D."/>
            <person name="Ton L.Q."/>
            <person name="Topalis P."/>
            <person name="Tu Z.J."/>
            <person name="Unger M.F."/>
            <person name="Walenz B."/>
            <person name="Wang A.H."/>
            <person name="Wang J."/>
            <person name="Wang M."/>
            <person name="Wang X."/>
            <person name="Woodford K.J."/>
            <person name="Wortman J.R."/>
            <person name="Wu M."/>
            <person name="Yao A."/>
            <person name="Zdobnov E.M."/>
            <person name="Zhang H."/>
            <person name="Zhao Q."/>
            <person name="Zhao S."/>
            <person name="Zhu S.C."/>
            <person name="Zhimulev I."/>
            <person name="Coluzzi M."/>
            <person name="della Torre A."/>
            <person name="Roth C.W."/>
            <person name="Louis C."/>
            <person name="Kalush F."/>
            <person name="Mural R.J."/>
            <person name="Myers E.W."/>
            <person name="Adams M.D."/>
            <person name="Smith H.O."/>
            <person name="Broder S."/>
            <person name="Gardner M.J."/>
            <person name="Fraser C.M."/>
            <person name="Birney E."/>
            <person name="Bork P."/>
            <person name="Brey P.T."/>
            <person name="Venter J.C."/>
            <person name="Weissenbach J."/>
            <person name="Kafatos F.C."/>
            <person name="Collins F.H."/>
            <person name="Hoffman S.L."/>
        </authorList>
    </citation>
    <scope>NUCLEOTIDE SEQUENCE [LARGE SCALE GENOMIC DNA]</scope>
    <source>
        <strain>PEST</strain>
    </source>
</reference>
<accession>Q7PTL2</accession>
<organism>
    <name type="scientific">Anopheles gambiae</name>
    <name type="common">African malaria mosquito</name>
    <dbReference type="NCBI Taxonomy" id="7165"/>
    <lineage>
        <taxon>Eukaryota</taxon>
        <taxon>Metazoa</taxon>
        <taxon>Ecdysozoa</taxon>
        <taxon>Arthropoda</taxon>
        <taxon>Hexapoda</taxon>
        <taxon>Insecta</taxon>
        <taxon>Pterygota</taxon>
        <taxon>Neoptera</taxon>
        <taxon>Endopterygota</taxon>
        <taxon>Diptera</taxon>
        <taxon>Nematocera</taxon>
        <taxon>Culicoidea</taxon>
        <taxon>Culicidae</taxon>
        <taxon>Anophelinae</taxon>
        <taxon>Anopheles</taxon>
    </lineage>
</organism>
<name>PBAN_ANOGA</name>
<evidence type="ECO:0000250" key="1">
    <source>
        <dbReference type="UniProtKB" id="A8CL69"/>
    </source>
</evidence>
<evidence type="ECO:0000250" key="2">
    <source>
        <dbReference type="UniProtKB" id="P09971"/>
    </source>
</evidence>
<evidence type="ECO:0000255" key="3"/>
<evidence type="ECO:0000256" key="4">
    <source>
        <dbReference type="SAM" id="MobiDB-lite"/>
    </source>
</evidence>
<evidence type="ECO:0000312" key="5">
    <source>
        <dbReference type="EMBL" id="EAA03729.3"/>
    </source>
</evidence>
<keyword id="KW-0027">Amidation</keyword>
<keyword id="KW-0165">Cleavage on pair of basic residues</keyword>
<keyword id="KW-0372">Hormone</keyword>
<keyword id="KW-0527">Neuropeptide</keyword>
<keyword id="KW-1185">Reference proteome</keyword>
<keyword id="KW-0964">Secreted</keyword>
<keyword id="KW-0732">Signal</keyword>
<feature type="signal peptide" evidence="3">
    <location>
        <begin position="1"/>
        <end position="22"/>
    </location>
</feature>
<feature type="propeptide" id="PRO_0000339258" evidence="1 3">
    <location>
        <begin position="23"/>
        <end position="64"/>
    </location>
</feature>
<feature type="peptide" id="PRO_0000339259" description="AAAMWFGPRL-amide" evidence="1">
    <location>
        <begin position="67"/>
        <end position="76"/>
    </location>
</feature>
<feature type="propeptide" id="PRO_0000339260" evidence="1">
    <location>
        <begin position="80"/>
        <end position="127"/>
    </location>
</feature>
<feature type="peptide" id="PRO_0000339261" description="PQPIFYHTTSPRL-amide" evidence="1">
    <location>
        <begin position="130"/>
        <end position="142"/>
    </location>
</feature>
<feature type="peptide" id="PRO_0000339262" description="DSVGENHQRPPFAPRL-amide" evidence="1">
    <location>
        <begin position="146"/>
        <end position="161"/>
    </location>
</feature>
<feature type="peptide" id="PRO_0000339263" description="NLPFSPRL-amide" evidence="1">
    <location>
        <begin position="164"/>
        <end position="171"/>
    </location>
</feature>
<feature type="propeptide" id="PRO_0000339264" evidence="1">
    <location>
        <begin position="174"/>
        <end position="187"/>
    </location>
</feature>
<feature type="region of interest" description="Disordered" evidence="4">
    <location>
        <begin position="34"/>
        <end position="58"/>
    </location>
</feature>
<feature type="region of interest" description="Disordered" evidence="4">
    <location>
        <begin position="132"/>
        <end position="163"/>
    </location>
</feature>
<feature type="compositionally biased region" description="Basic and acidic residues" evidence="4">
    <location>
        <begin position="34"/>
        <end position="43"/>
    </location>
</feature>
<feature type="compositionally biased region" description="Basic and acidic residues" evidence="4">
    <location>
        <begin position="143"/>
        <end position="153"/>
    </location>
</feature>
<feature type="modified residue" description="Leucine amide" evidence="1">
    <location>
        <position position="76"/>
    </location>
</feature>
<feature type="modified residue" description="Leucine amide" evidence="1">
    <location>
        <position position="142"/>
    </location>
</feature>
<feature type="modified residue" description="Leucine amide" evidence="1">
    <location>
        <position position="161"/>
    </location>
</feature>
<feature type="modified residue" description="Leucine amide" evidence="1">
    <location>
        <position position="171"/>
    </location>
</feature>
<proteinExistence type="inferred from homology"/>
<protein>
    <recommendedName>
        <fullName>PBAN-type neuropeptides</fullName>
    </recommendedName>
    <alternativeName>
        <fullName>Pheromone/pyrokinin biosynthesis-activating neuropeptide</fullName>
    </alternativeName>
    <component>
        <recommendedName>
            <fullName>AAAMWFGPRL-amide</fullName>
        </recommendedName>
        <alternativeName>
            <fullName>Pyrokinin-1</fullName>
        </alternativeName>
    </component>
    <component>
        <recommendedName>
            <fullName>PQPIFYHTTSPRL-amide</fullName>
        </recommendedName>
    </component>
    <component>
        <recommendedName>
            <fullName>DSVGENHQRPPFAPRL-amide</fullName>
        </recommendedName>
        <alternativeName>
            <fullName>Pyrokinin-2</fullName>
        </alternativeName>
    </component>
    <component>
        <recommendedName>
            <fullName>NLPFSPRL-amide</fullName>
        </recommendedName>
        <alternativeName>
            <fullName>Pyrokinin-3</fullName>
        </alternativeName>
    </component>
</protein>
<dbReference type="EMBL" id="AAAB01008799">
    <property type="protein sequence ID" value="EAA03729.3"/>
    <property type="molecule type" value="Genomic_DNA"/>
</dbReference>
<dbReference type="SMR" id="Q7PTL2"/>
<dbReference type="STRING" id="7165.Q7PTL2"/>
<dbReference type="PaxDb" id="7165-AGAP002292-PA"/>
<dbReference type="EnsemblMetazoa" id="AGAP002292-RA">
    <property type="protein sequence ID" value="AGAP002292-PA"/>
    <property type="gene ID" value="AGAP002292"/>
</dbReference>
<dbReference type="GeneID" id="1269266"/>
<dbReference type="KEGG" id="aga:1269266"/>
<dbReference type="VEuPathDB" id="VectorBase:AGAMI1_011181"/>
<dbReference type="VEuPathDB" id="VectorBase:AGAP002292"/>
<dbReference type="eggNOG" id="ENOG502R349">
    <property type="taxonomic scope" value="Eukaryota"/>
</dbReference>
<dbReference type="HOGENOM" id="CLU_1541633_0_0_1"/>
<dbReference type="InParanoid" id="Q7PTL2"/>
<dbReference type="OMA" id="KPQPIFY"/>
<dbReference type="PhylomeDB" id="Q7PTL2"/>
<dbReference type="Proteomes" id="UP000007062">
    <property type="component" value="Chromosome 2R"/>
</dbReference>
<dbReference type="GO" id="GO:0005576">
    <property type="term" value="C:extracellular region"/>
    <property type="evidence" value="ECO:0000250"/>
    <property type="project" value="UniProtKB"/>
</dbReference>
<dbReference type="GO" id="GO:0016084">
    <property type="term" value="F:myostimulatory hormone activity"/>
    <property type="evidence" value="ECO:0000250"/>
    <property type="project" value="UniProtKB"/>
</dbReference>
<dbReference type="GO" id="GO:0005184">
    <property type="term" value="F:neuropeptide hormone activity"/>
    <property type="evidence" value="ECO:0000250"/>
    <property type="project" value="UniProtKB"/>
</dbReference>
<dbReference type="GO" id="GO:0007218">
    <property type="term" value="P:neuropeptide signaling pathway"/>
    <property type="evidence" value="ECO:0000250"/>
    <property type="project" value="UniProtKB"/>
</dbReference>
<dbReference type="InterPro" id="IPR001484">
    <property type="entry name" value="Pyrokinin_CS"/>
</dbReference>
<dbReference type="PROSITE" id="PS00539">
    <property type="entry name" value="PYROKININ"/>
    <property type="match status" value="2"/>
</dbReference>
<gene>
    <name evidence="1" type="primary">PBAN</name>
    <name evidence="5" type="synonym">PKP</name>
    <name type="ORF">AGAP002292</name>
</gene>
<comment type="function">
    <text evidence="1 2">A hormone that controls sex pheromone production in females and pheromone responsiveness in male. Also mediates visceral muscle contractile activity (myotropic activity) (By similarity).</text>
</comment>
<comment type="subcellular location">
    <subcellularLocation>
        <location evidence="1">Secreted</location>
    </subcellularLocation>
</comment>
<comment type="similarity">
    <text evidence="3">Belongs to the pyrokinin family.</text>
</comment>
<sequence>MSRFYFFFNLICLYLAIKSALSAELDTNDQKYADLRTTGRGESPDSTGPDSDTLRRDDGAEGLNKRAAAMWFGPRLGKRTIAADLHDDLVEEFDAEPLGYAGEPPQKLATELVQGAPYMVLLVTAKPRKPQPIFYHTTSPRLGRRDSVGENHQRPPFAPRLGRNLPFSPRLGRSYNGGYPLPFQFAY</sequence>